<evidence type="ECO:0000255" key="1">
    <source>
        <dbReference type="HAMAP-Rule" id="MF_00033"/>
    </source>
</evidence>
<organism>
    <name type="scientific">Streptococcus uberis (strain ATCC BAA-854 / 0140J)</name>
    <dbReference type="NCBI Taxonomy" id="218495"/>
    <lineage>
        <taxon>Bacteria</taxon>
        <taxon>Bacillati</taxon>
        <taxon>Bacillota</taxon>
        <taxon>Bacilli</taxon>
        <taxon>Lactobacillales</taxon>
        <taxon>Streptococcaceae</taxon>
        <taxon>Streptococcus</taxon>
    </lineage>
</organism>
<gene>
    <name evidence="1" type="primary">murG</name>
    <name type="ordered locus">SUB1293</name>
</gene>
<feature type="chain" id="PRO_1000192148" description="UDP-N-acetylglucosamine--N-acetylmuramyl-(pentapeptide) pyrophosphoryl-undecaprenol N-acetylglucosamine transferase">
    <location>
        <begin position="1"/>
        <end position="358"/>
    </location>
</feature>
<feature type="binding site" evidence="1">
    <location>
        <position position="196"/>
    </location>
    <ligand>
        <name>UDP-N-acetyl-alpha-D-glucosamine</name>
        <dbReference type="ChEBI" id="CHEBI:57705"/>
    </ligand>
</feature>
<feature type="binding site" evidence="1">
    <location>
        <position position="287"/>
    </location>
    <ligand>
        <name>UDP-N-acetyl-alpha-D-glucosamine</name>
        <dbReference type="ChEBI" id="CHEBI:57705"/>
    </ligand>
</feature>
<accession>B9DUV6</accession>
<sequence>MTKRILFTGGGTVGHVTLNLILIPKFLKDGWEVHYIGDKKGIEYQEIQKSGYPVTFHAIKTGKLRRYFSWQNLIDVFKVATGLLQSLVIINKVKPQALFSKGGFVSVPPVIASRLMGVPVFVHESDLSMGLANKIALKFASTMYTTFESQVTNPIIKHIGAVTKVSKESGNYLPELSDIQNKFNPQLKTLLFIGGSAGAKVFNQLITNNPDLTKAFNVINITGDSQLNELSQNLYRVDYVTDLYQPLMQLADLVITRGGSNTLFELLAMQKLHLIVPLGKEASRGDQLENANYFEKQGYARQLSEELFNPETLISEVHYLLEHQDQFRKAMSESQEIKSPDVFYDLLKNDISLKAKGK</sequence>
<name>MURG_STRU0</name>
<keyword id="KW-0131">Cell cycle</keyword>
<keyword id="KW-0132">Cell division</keyword>
<keyword id="KW-1003">Cell membrane</keyword>
<keyword id="KW-0133">Cell shape</keyword>
<keyword id="KW-0961">Cell wall biogenesis/degradation</keyword>
<keyword id="KW-0328">Glycosyltransferase</keyword>
<keyword id="KW-0472">Membrane</keyword>
<keyword id="KW-0573">Peptidoglycan synthesis</keyword>
<keyword id="KW-1185">Reference proteome</keyword>
<keyword id="KW-0808">Transferase</keyword>
<reference key="1">
    <citation type="journal article" date="2009" name="BMC Genomics">
        <title>Evidence for niche adaptation in the genome of the bovine pathogen Streptococcus uberis.</title>
        <authorList>
            <person name="Ward P.N."/>
            <person name="Holden M.T.G."/>
            <person name="Leigh J.A."/>
            <person name="Lennard N."/>
            <person name="Bignell A."/>
            <person name="Barron A."/>
            <person name="Clark L."/>
            <person name="Quail M.A."/>
            <person name="Woodward J."/>
            <person name="Barrell B.G."/>
            <person name="Egan S.A."/>
            <person name="Field T.R."/>
            <person name="Maskell D."/>
            <person name="Kehoe M."/>
            <person name="Dowson C.G."/>
            <person name="Chanter N."/>
            <person name="Whatmore A.M."/>
            <person name="Bentley S.D."/>
            <person name="Parkhill J."/>
        </authorList>
    </citation>
    <scope>NUCLEOTIDE SEQUENCE [LARGE SCALE GENOMIC DNA]</scope>
    <source>
        <strain>ATCC BAA-854 / 0140J</strain>
    </source>
</reference>
<comment type="function">
    <text evidence="1">Cell wall formation. Catalyzes the transfer of a GlcNAc subunit on undecaprenyl-pyrophosphoryl-MurNAc-pentapeptide (lipid intermediate I) to form undecaprenyl-pyrophosphoryl-MurNAc-(pentapeptide)GlcNAc (lipid intermediate II).</text>
</comment>
<comment type="catalytic activity">
    <reaction evidence="1">
        <text>Mur2Ac(oyl-L-Ala-gamma-D-Glu-L-Lys-D-Ala-D-Ala)-di-trans,octa-cis-undecaprenyl diphosphate + UDP-N-acetyl-alpha-D-glucosamine = beta-D-GlcNAc-(1-&gt;4)-Mur2Ac(oyl-L-Ala-gamma-D-Glu-L-Lys-D-Ala-D-Ala)-di-trans,octa-cis-undecaprenyl diphosphate + UDP + H(+)</text>
        <dbReference type="Rhea" id="RHEA:23192"/>
        <dbReference type="ChEBI" id="CHEBI:15378"/>
        <dbReference type="ChEBI" id="CHEBI:57705"/>
        <dbReference type="ChEBI" id="CHEBI:58223"/>
        <dbReference type="ChEBI" id="CHEBI:60032"/>
        <dbReference type="ChEBI" id="CHEBI:60033"/>
        <dbReference type="EC" id="2.4.1.227"/>
    </reaction>
</comment>
<comment type="pathway">
    <text evidence="1">Cell wall biogenesis; peptidoglycan biosynthesis.</text>
</comment>
<comment type="subcellular location">
    <subcellularLocation>
        <location evidence="1">Cell membrane</location>
        <topology evidence="1">Peripheral membrane protein</topology>
        <orientation evidence="1">Cytoplasmic side</orientation>
    </subcellularLocation>
</comment>
<comment type="similarity">
    <text evidence="1">Belongs to the glycosyltransferase 28 family. MurG subfamily.</text>
</comment>
<protein>
    <recommendedName>
        <fullName evidence="1">UDP-N-acetylglucosamine--N-acetylmuramyl-(pentapeptide) pyrophosphoryl-undecaprenol N-acetylglucosamine transferase</fullName>
        <ecNumber evidence="1">2.4.1.227</ecNumber>
    </recommendedName>
    <alternativeName>
        <fullName evidence="1">Undecaprenyl-PP-MurNAc-pentapeptide-UDPGlcNAc GlcNAc transferase</fullName>
    </alternativeName>
</protein>
<dbReference type="EC" id="2.4.1.227" evidence="1"/>
<dbReference type="EMBL" id="AM946015">
    <property type="protein sequence ID" value="CAR42819.1"/>
    <property type="molecule type" value="Genomic_DNA"/>
</dbReference>
<dbReference type="RefSeq" id="WP_012658767.1">
    <property type="nucleotide sequence ID" value="NC_012004.1"/>
</dbReference>
<dbReference type="SMR" id="B9DUV6"/>
<dbReference type="STRING" id="218495.SUB1293"/>
<dbReference type="CAZy" id="GT28">
    <property type="family name" value="Glycosyltransferase Family 28"/>
</dbReference>
<dbReference type="KEGG" id="sub:SUB1293"/>
<dbReference type="eggNOG" id="COG0707">
    <property type="taxonomic scope" value="Bacteria"/>
</dbReference>
<dbReference type="HOGENOM" id="CLU_037404_0_0_9"/>
<dbReference type="OrthoDB" id="9808936at2"/>
<dbReference type="UniPathway" id="UPA00219"/>
<dbReference type="Proteomes" id="UP000000449">
    <property type="component" value="Chromosome"/>
</dbReference>
<dbReference type="GO" id="GO:0005886">
    <property type="term" value="C:plasma membrane"/>
    <property type="evidence" value="ECO:0007669"/>
    <property type="project" value="UniProtKB-SubCell"/>
</dbReference>
<dbReference type="GO" id="GO:0050511">
    <property type="term" value="F:undecaprenyldiphospho-muramoylpentapeptide beta-N-acetylglucosaminyltransferase activity"/>
    <property type="evidence" value="ECO:0007669"/>
    <property type="project" value="UniProtKB-UniRule"/>
</dbReference>
<dbReference type="GO" id="GO:0005975">
    <property type="term" value="P:carbohydrate metabolic process"/>
    <property type="evidence" value="ECO:0007669"/>
    <property type="project" value="InterPro"/>
</dbReference>
<dbReference type="GO" id="GO:0051301">
    <property type="term" value="P:cell division"/>
    <property type="evidence" value="ECO:0007669"/>
    <property type="project" value="UniProtKB-KW"/>
</dbReference>
<dbReference type="GO" id="GO:0071555">
    <property type="term" value="P:cell wall organization"/>
    <property type="evidence" value="ECO:0007669"/>
    <property type="project" value="UniProtKB-KW"/>
</dbReference>
<dbReference type="GO" id="GO:0030259">
    <property type="term" value="P:lipid glycosylation"/>
    <property type="evidence" value="ECO:0007669"/>
    <property type="project" value="UniProtKB-UniRule"/>
</dbReference>
<dbReference type="GO" id="GO:0009252">
    <property type="term" value="P:peptidoglycan biosynthetic process"/>
    <property type="evidence" value="ECO:0007669"/>
    <property type="project" value="UniProtKB-UniRule"/>
</dbReference>
<dbReference type="GO" id="GO:0008360">
    <property type="term" value="P:regulation of cell shape"/>
    <property type="evidence" value="ECO:0007669"/>
    <property type="project" value="UniProtKB-KW"/>
</dbReference>
<dbReference type="CDD" id="cd03785">
    <property type="entry name" value="GT28_MurG"/>
    <property type="match status" value="1"/>
</dbReference>
<dbReference type="Gene3D" id="3.40.50.2000">
    <property type="entry name" value="Glycogen Phosphorylase B"/>
    <property type="match status" value="2"/>
</dbReference>
<dbReference type="HAMAP" id="MF_00033">
    <property type="entry name" value="MurG"/>
    <property type="match status" value="1"/>
</dbReference>
<dbReference type="InterPro" id="IPR006009">
    <property type="entry name" value="GlcNAc_MurG"/>
</dbReference>
<dbReference type="InterPro" id="IPR007235">
    <property type="entry name" value="Glyco_trans_28_C"/>
</dbReference>
<dbReference type="InterPro" id="IPR004276">
    <property type="entry name" value="GlycoTrans_28_N"/>
</dbReference>
<dbReference type="PANTHER" id="PTHR21015:SF27">
    <property type="entry name" value="UDP-N-ACETYLGLUCOSAMINE--N-ACETYLMURAMYL-(PENTAPEPTIDE) PYROPHOSPHORYL-UNDECAPRENOL N-ACETYLGLUCOSAMINE TRANSFERASE"/>
    <property type="match status" value="1"/>
</dbReference>
<dbReference type="PANTHER" id="PTHR21015">
    <property type="entry name" value="UDP-N-ACETYLGLUCOSAMINE--N-ACETYLMURAMYL-(PENTAPEPTIDE) PYROPHOSPHORYL-UNDECAPRENOL N-ACETYLGLUCOSAMINE TRANSFERASE 1"/>
    <property type="match status" value="1"/>
</dbReference>
<dbReference type="Pfam" id="PF04101">
    <property type="entry name" value="Glyco_tran_28_C"/>
    <property type="match status" value="1"/>
</dbReference>
<dbReference type="Pfam" id="PF03033">
    <property type="entry name" value="Glyco_transf_28"/>
    <property type="match status" value="1"/>
</dbReference>
<dbReference type="SUPFAM" id="SSF53756">
    <property type="entry name" value="UDP-Glycosyltransferase/glycogen phosphorylase"/>
    <property type="match status" value="1"/>
</dbReference>
<proteinExistence type="inferred from homology"/>